<reference key="1">
    <citation type="journal article" date="1997" name="Nature">
        <title>The nucleotide sequence of Saccharomyces cerevisiae chromosome IV.</title>
        <authorList>
            <person name="Jacq C."/>
            <person name="Alt-Moerbe J."/>
            <person name="Andre B."/>
            <person name="Arnold W."/>
            <person name="Bahr A."/>
            <person name="Ballesta J.P.G."/>
            <person name="Bargues M."/>
            <person name="Baron L."/>
            <person name="Becker A."/>
            <person name="Biteau N."/>
            <person name="Bloecker H."/>
            <person name="Blugeon C."/>
            <person name="Boskovic J."/>
            <person name="Brandt P."/>
            <person name="Brueckner M."/>
            <person name="Buitrago M.J."/>
            <person name="Coster F."/>
            <person name="Delaveau T."/>
            <person name="del Rey F."/>
            <person name="Dujon B."/>
            <person name="Eide L.G."/>
            <person name="Garcia-Cantalejo J.M."/>
            <person name="Goffeau A."/>
            <person name="Gomez-Peris A."/>
            <person name="Granotier C."/>
            <person name="Hanemann V."/>
            <person name="Hankeln T."/>
            <person name="Hoheisel J.D."/>
            <person name="Jaeger W."/>
            <person name="Jimenez A."/>
            <person name="Jonniaux J.-L."/>
            <person name="Kraemer C."/>
            <person name="Kuester H."/>
            <person name="Laamanen P."/>
            <person name="Legros Y."/>
            <person name="Louis E.J."/>
            <person name="Moeller-Rieker S."/>
            <person name="Monnet A."/>
            <person name="Moro M."/>
            <person name="Mueller-Auer S."/>
            <person name="Nussbaumer B."/>
            <person name="Paricio N."/>
            <person name="Paulin L."/>
            <person name="Perea J."/>
            <person name="Perez-Alonso M."/>
            <person name="Perez-Ortin J.E."/>
            <person name="Pohl T.M."/>
            <person name="Prydz H."/>
            <person name="Purnelle B."/>
            <person name="Rasmussen S.W."/>
            <person name="Remacha M.A."/>
            <person name="Revuelta J.L."/>
            <person name="Rieger M."/>
            <person name="Salom D."/>
            <person name="Saluz H.P."/>
            <person name="Saiz J.E."/>
            <person name="Saren A.-M."/>
            <person name="Schaefer M."/>
            <person name="Scharfe M."/>
            <person name="Schmidt E.R."/>
            <person name="Schneider C."/>
            <person name="Scholler P."/>
            <person name="Schwarz S."/>
            <person name="Soler-Mira A."/>
            <person name="Urrestarazu L.A."/>
            <person name="Verhasselt P."/>
            <person name="Vissers S."/>
            <person name="Voet M."/>
            <person name="Volckaert G."/>
            <person name="Wagner G."/>
            <person name="Wambutt R."/>
            <person name="Wedler E."/>
            <person name="Wedler H."/>
            <person name="Woelfl S."/>
            <person name="Harris D.E."/>
            <person name="Bowman S."/>
            <person name="Brown D."/>
            <person name="Churcher C.M."/>
            <person name="Connor R."/>
            <person name="Dedman K."/>
            <person name="Gentles S."/>
            <person name="Hamlin N."/>
            <person name="Hunt S."/>
            <person name="Jones L."/>
            <person name="McDonald S."/>
            <person name="Murphy L.D."/>
            <person name="Niblett D."/>
            <person name="Odell C."/>
            <person name="Oliver K."/>
            <person name="Rajandream M.A."/>
            <person name="Richards C."/>
            <person name="Shore L."/>
            <person name="Walsh S.V."/>
            <person name="Barrell B.G."/>
            <person name="Dietrich F.S."/>
            <person name="Mulligan J.T."/>
            <person name="Allen E."/>
            <person name="Araujo R."/>
            <person name="Aviles E."/>
            <person name="Berno A."/>
            <person name="Carpenter J."/>
            <person name="Chen E."/>
            <person name="Cherry J.M."/>
            <person name="Chung E."/>
            <person name="Duncan M."/>
            <person name="Hunicke-Smith S."/>
            <person name="Hyman R.W."/>
            <person name="Komp C."/>
            <person name="Lashkari D."/>
            <person name="Lew H."/>
            <person name="Lin D."/>
            <person name="Mosedale D."/>
            <person name="Nakahara K."/>
            <person name="Namath A."/>
            <person name="Oefner P."/>
            <person name="Oh C."/>
            <person name="Petel F.X."/>
            <person name="Roberts D."/>
            <person name="Schramm S."/>
            <person name="Schroeder M."/>
            <person name="Shogren T."/>
            <person name="Shroff N."/>
            <person name="Winant A."/>
            <person name="Yelton M.A."/>
            <person name="Botstein D."/>
            <person name="Davis R.W."/>
            <person name="Johnston M."/>
            <person name="Andrews S."/>
            <person name="Brinkman R."/>
            <person name="Cooper J."/>
            <person name="Ding H."/>
            <person name="Du Z."/>
            <person name="Favello A."/>
            <person name="Fulton L."/>
            <person name="Gattung S."/>
            <person name="Greco T."/>
            <person name="Hallsworth K."/>
            <person name="Hawkins J."/>
            <person name="Hillier L.W."/>
            <person name="Jier M."/>
            <person name="Johnson D."/>
            <person name="Johnston L."/>
            <person name="Kirsten J."/>
            <person name="Kucaba T."/>
            <person name="Langston Y."/>
            <person name="Latreille P."/>
            <person name="Le T."/>
            <person name="Mardis E."/>
            <person name="Menezes S."/>
            <person name="Miller N."/>
            <person name="Nhan M."/>
            <person name="Pauley A."/>
            <person name="Peluso D."/>
            <person name="Rifkin L."/>
            <person name="Riles L."/>
            <person name="Taich A."/>
            <person name="Trevaskis E."/>
            <person name="Vignati D."/>
            <person name="Wilcox L."/>
            <person name="Wohldman P."/>
            <person name="Vaudin M."/>
            <person name="Wilson R."/>
            <person name="Waterston R."/>
            <person name="Albermann K."/>
            <person name="Hani J."/>
            <person name="Heumann K."/>
            <person name="Kleine K."/>
            <person name="Mewes H.-W."/>
            <person name="Zollner A."/>
            <person name="Zaccaria P."/>
        </authorList>
    </citation>
    <scope>NUCLEOTIDE SEQUENCE [LARGE SCALE GENOMIC DNA]</scope>
    <source>
        <strain>ATCC 204508 / S288c</strain>
    </source>
</reference>
<reference key="2">
    <citation type="journal article" date="2014" name="G3 (Bethesda)">
        <title>The reference genome sequence of Saccharomyces cerevisiae: Then and now.</title>
        <authorList>
            <person name="Engel S.R."/>
            <person name="Dietrich F.S."/>
            <person name="Fisk D.G."/>
            <person name="Binkley G."/>
            <person name="Balakrishnan R."/>
            <person name="Costanzo M.C."/>
            <person name="Dwight S.S."/>
            <person name="Hitz B.C."/>
            <person name="Karra K."/>
            <person name="Nash R.S."/>
            <person name="Weng S."/>
            <person name="Wong E.D."/>
            <person name="Lloyd P."/>
            <person name="Skrzypek M.S."/>
            <person name="Miyasato S.R."/>
            <person name="Simison M."/>
            <person name="Cherry J.M."/>
        </authorList>
    </citation>
    <scope>GENOME REANNOTATION</scope>
    <source>
        <strain>ATCC 204508 / S288c</strain>
    </source>
</reference>
<reference key="3">
    <citation type="journal article" date="2005" name="Mutat. Res.">
        <title>HIM1, a new yeast Saccharomyces cerevisiae gene playing a role in control of spontaneous and induced mutagenesis.</title>
        <authorList>
            <person name="Kelberg E.P."/>
            <person name="Kovaltsova S.V."/>
            <person name="Alekseev S.Y."/>
            <person name="Fedorova I.V."/>
            <person name="Gracheva L.M."/>
            <person name="Evstukhina T.A."/>
            <person name="Korolev V.G."/>
        </authorList>
    </citation>
    <scope>FUNCTION</scope>
</reference>
<keyword id="KW-0227">DNA damage</keyword>
<keyword id="KW-0234">DNA repair</keyword>
<keyword id="KW-1185">Reference proteome</keyword>
<proteinExistence type="predicted"/>
<protein>
    <recommendedName>
        <fullName>Protein HIM1</fullName>
    </recommendedName>
    <alternativeName>
        <fullName>High induction of mutagenesis protein 1</fullName>
    </alternativeName>
</protein>
<evidence type="ECO:0000269" key="1">
    <source>
    </source>
</evidence>
<feature type="chain" id="PRO_0000233013" description="Protein HIM1">
    <location>
        <begin position="1"/>
        <end position="414"/>
    </location>
</feature>
<organism>
    <name type="scientific">Saccharomyces cerevisiae (strain ATCC 204508 / S288c)</name>
    <name type="common">Baker's yeast</name>
    <dbReference type="NCBI Taxonomy" id="559292"/>
    <lineage>
        <taxon>Eukaryota</taxon>
        <taxon>Fungi</taxon>
        <taxon>Dikarya</taxon>
        <taxon>Ascomycota</taxon>
        <taxon>Saccharomycotina</taxon>
        <taxon>Saccharomycetes</taxon>
        <taxon>Saccharomycetales</taxon>
        <taxon>Saccharomycetaceae</taxon>
        <taxon>Saccharomyces</taxon>
    </lineage>
</organism>
<comment type="function">
    <text evidence="1">May participate in the control of processing of mutational intermediates appearing during error-prone bypass of DNA damage.</text>
</comment>
<accession>Q06674</accession>
<accession>D6VSU8</accession>
<gene>
    <name type="primary">HIM1</name>
    <name type="ordered locus">YDR317W</name>
</gene>
<name>HIM1_YEAST</name>
<dbReference type="EMBL" id="U32517">
    <property type="protein sequence ID" value="AAB64753.1"/>
    <property type="molecule type" value="Genomic_DNA"/>
</dbReference>
<dbReference type="EMBL" id="BK006938">
    <property type="protein sequence ID" value="DAA12158.1"/>
    <property type="molecule type" value="Genomic_DNA"/>
</dbReference>
<dbReference type="PIR" id="S59783">
    <property type="entry name" value="S59783"/>
</dbReference>
<dbReference type="RefSeq" id="NP_010603.3">
    <property type="nucleotide sequence ID" value="NM_001180625.3"/>
</dbReference>
<dbReference type="BioGRID" id="32373">
    <property type="interactions" value="46"/>
</dbReference>
<dbReference type="DIP" id="DIP-4660N"/>
<dbReference type="FunCoup" id="Q06674">
    <property type="interactions" value="40"/>
</dbReference>
<dbReference type="STRING" id="4932.YDR317W"/>
<dbReference type="iPTMnet" id="Q06674"/>
<dbReference type="PaxDb" id="4932-YDR317W"/>
<dbReference type="PeptideAtlas" id="Q06674"/>
<dbReference type="EnsemblFungi" id="YDR317W_mRNA">
    <property type="protein sequence ID" value="YDR317W"/>
    <property type="gene ID" value="YDR317W"/>
</dbReference>
<dbReference type="GeneID" id="851915"/>
<dbReference type="KEGG" id="sce:YDR317W"/>
<dbReference type="AGR" id="SGD:S000002725"/>
<dbReference type="SGD" id="S000002725">
    <property type="gene designation" value="HIM1"/>
</dbReference>
<dbReference type="VEuPathDB" id="FungiDB:YDR317W"/>
<dbReference type="eggNOG" id="ENOG502RZQF">
    <property type="taxonomic scope" value="Eukaryota"/>
</dbReference>
<dbReference type="HOGENOM" id="CLU_036495_0_0_1"/>
<dbReference type="InParanoid" id="Q06674"/>
<dbReference type="OMA" id="TIDYINM"/>
<dbReference type="OrthoDB" id="4067292at2759"/>
<dbReference type="BioCyc" id="YEAST:G3O-29875-MONOMER"/>
<dbReference type="BioGRID-ORCS" id="851915">
    <property type="hits" value="0 hits in 10 CRISPR screens"/>
</dbReference>
<dbReference type="PRO" id="PR:Q06674"/>
<dbReference type="Proteomes" id="UP000002311">
    <property type="component" value="Chromosome IV"/>
</dbReference>
<dbReference type="RNAct" id="Q06674">
    <property type="molecule type" value="protein"/>
</dbReference>
<dbReference type="GO" id="GO:0006281">
    <property type="term" value="P:DNA repair"/>
    <property type="evidence" value="ECO:0000316"/>
    <property type="project" value="SGD"/>
</dbReference>
<dbReference type="Gene3D" id="3.40.50.720">
    <property type="entry name" value="NAD(P)-binding Rossmann-like Domain"/>
    <property type="match status" value="1"/>
</dbReference>
<dbReference type="InterPro" id="IPR014843">
    <property type="entry name" value="Him1/Fmp52"/>
</dbReference>
<dbReference type="Pfam" id="PF08732">
    <property type="entry name" value="HIM1"/>
    <property type="match status" value="1"/>
</dbReference>
<sequence>MSYSVNTFTDYVLLFGSSSLVGKGILENLLDINLYIKNVSDLQGKLDSLSEIKGNVVLNKHVFCVNRRCINEEKSFMKTIDYINMRSVTWQGGRYYLRSRKEKDTEKVPSSPNTFCYDNFEEGFIKNTPEERGKDGYSFVYNQKQFSYTLHYACGKEKGIEIICNFTVTQLIIPRSETWPKLLPRIFSGTQKLEKFDIDNKNYVPGRSLPSLCDISTMVCSLGSTSARVRRTQVPSSFADYYLPFNLAQEFTNTTNKRLVVTTAFNNDFLSKTFEYFRIKAKLENDLDEALPNKLKELVILRPGPMCGQHGNPINVELGKENSTFLEKIFYYPHYLLVYKKKYISEARRIGLRTKLSEIIASSIYRMPGSALLGYAVPVSKVSYVASLMAIERKSKEAGPKLEVISSYQIDMIV</sequence>